<organism>
    <name type="scientific">Mus musculus</name>
    <name type="common">Mouse</name>
    <dbReference type="NCBI Taxonomy" id="10090"/>
    <lineage>
        <taxon>Eukaryota</taxon>
        <taxon>Metazoa</taxon>
        <taxon>Chordata</taxon>
        <taxon>Craniata</taxon>
        <taxon>Vertebrata</taxon>
        <taxon>Euteleostomi</taxon>
        <taxon>Mammalia</taxon>
        <taxon>Eutheria</taxon>
        <taxon>Euarchontoglires</taxon>
        <taxon>Glires</taxon>
        <taxon>Rodentia</taxon>
        <taxon>Myomorpha</taxon>
        <taxon>Muroidea</taxon>
        <taxon>Muridae</taxon>
        <taxon>Murinae</taxon>
        <taxon>Mus</taxon>
        <taxon>Mus</taxon>
    </lineage>
</organism>
<accession>A2AWA9</accession>
<accession>Q5DTN1</accession>
<accession>Q8BQ32</accession>
<accession>Q8C8W3</accession>
<accession>Q8CD74</accession>
<accession>Q8R312</accession>
<keyword id="KW-0025">Alternative splicing</keyword>
<keyword id="KW-0131">Cell cycle</keyword>
<keyword id="KW-0175">Coiled coil</keyword>
<keyword id="KW-0963">Cytoplasm</keyword>
<keyword id="KW-0206">Cytoskeleton</keyword>
<keyword id="KW-0343">GTPase activation</keyword>
<keyword id="KW-0597">Phosphoprotein</keyword>
<keyword id="KW-1185">Reference proteome</keyword>
<dbReference type="EMBL" id="AK031315">
    <property type="protein sequence ID" value="BAC27344.1"/>
    <property type="molecule type" value="mRNA"/>
</dbReference>
<dbReference type="EMBL" id="AK044346">
    <property type="protein sequence ID" value="BAC31880.1"/>
    <property type="molecule type" value="mRNA"/>
</dbReference>
<dbReference type="EMBL" id="AK051644">
    <property type="protein sequence ID" value="BAC34703.1"/>
    <property type="status" value="ALT_INIT"/>
    <property type="molecule type" value="mRNA"/>
</dbReference>
<dbReference type="EMBL" id="AK220489">
    <property type="protein sequence ID" value="BAD90509.1"/>
    <property type="status" value="ALT_INIT"/>
    <property type="molecule type" value="mRNA"/>
</dbReference>
<dbReference type="EMBL" id="AL953890">
    <property type="status" value="NOT_ANNOTATED_CDS"/>
    <property type="molecule type" value="Genomic_DNA"/>
</dbReference>
<dbReference type="EMBL" id="BC026862">
    <property type="protein sequence ID" value="AAH26862.1"/>
    <property type="status" value="ALT_INIT"/>
    <property type="molecule type" value="mRNA"/>
</dbReference>
<dbReference type="EMBL" id="BC031714">
    <property type="protein sequence ID" value="AAH31714.1"/>
    <property type="status" value="ALT_INIT"/>
    <property type="molecule type" value="mRNA"/>
</dbReference>
<dbReference type="CCDS" id="CCDS16002.1">
    <molecule id="A2AWA9-1"/>
</dbReference>
<dbReference type="CCDS" id="CCDS16003.1">
    <molecule id="A2AWA9-2"/>
</dbReference>
<dbReference type="RefSeq" id="NP_001029132.1">
    <molecule id="A2AWA9-2"/>
    <property type="nucleotide sequence ID" value="NM_001033960.1"/>
</dbReference>
<dbReference type="RefSeq" id="NP_001349885.1">
    <molecule id="A2AWA9-1"/>
    <property type="nucleotide sequence ID" value="NM_001362956.1"/>
</dbReference>
<dbReference type="RefSeq" id="NP_001349886.1">
    <molecule id="A2AWA9-2"/>
    <property type="nucleotide sequence ID" value="NM_001362957.1"/>
</dbReference>
<dbReference type="RefSeq" id="NP_666233.2">
    <molecule id="A2AWA9-1"/>
    <property type="nucleotide sequence ID" value="NM_146121.2"/>
</dbReference>
<dbReference type="RefSeq" id="XP_006498057.1">
    <property type="nucleotide sequence ID" value="XM_006497994.3"/>
</dbReference>
<dbReference type="RefSeq" id="XP_017172964.1">
    <property type="nucleotide sequence ID" value="XM_017317475.1"/>
</dbReference>
<dbReference type="SMR" id="A2AWA9"/>
<dbReference type="BioGRID" id="230687">
    <property type="interactions" value="9"/>
</dbReference>
<dbReference type="FunCoup" id="A2AWA9">
    <property type="interactions" value="4087"/>
</dbReference>
<dbReference type="IntAct" id="A2AWA9">
    <property type="interactions" value="1"/>
</dbReference>
<dbReference type="STRING" id="10090.ENSMUSP00000061624"/>
<dbReference type="GlyGen" id="A2AWA9">
    <property type="glycosylation" value="2 sites, 1 N-linked glycan (1 site), 1 O-linked glycan (1 site)"/>
</dbReference>
<dbReference type="iPTMnet" id="A2AWA9"/>
<dbReference type="PhosphoSitePlus" id="A2AWA9"/>
<dbReference type="SwissPalm" id="A2AWA9"/>
<dbReference type="PaxDb" id="10090-ENSMUSP00000068835"/>
<dbReference type="PeptideAtlas" id="A2AWA9"/>
<dbReference type="ProteomicsDB" id="300311">
    <molecule id="A2AWA9-1"/>
</dbReference>
<dbReference type="ProteomicsDB" id="300312">
    <molecule id="A2AWA9-2"/>
</dbReference>
<dbReference type="ProteomicsDB" id="300313">
    <molecule id="A2AWA9-3"/>
</dbReference>
<dbReference type="Pumba" id="A2AWA9"/>
<dbReference type="Antibodypedia" id="30396">
    <property type="antibodies" value="259 antibodies from 27 providers"/>
</dbReference>
<dbReference type="DNASU" id="227800"/>
<dbReference type="Ensembl" id="ENSMUST00000061179.12">
    <molecule id="A2AWA9-1"/>
    <property type="protein sequence ID" value="ENSMUSP00000061624.6"/>
    <property type="gene ID" value="ENSMUSG00000035437.16"/>
</dbReference>
<dbReference type="Ensembl" id="ENSMUST00000066055.10">
    <molecule id="A2AWA9-2"/>
    <property type="protein sequence ID" value="ENSMUSP00000068835.4"/>
    <property type="gene ID" value="ENSMUSG00000035437.16"/>
</dbReference>
<dbReference type="Ensembl" id="ENSMUST00000112920.2">
    <molecule id="A2AWA9-1"/>
    <property type="protein sequence ID" value="ENSMUSP00000108542.2"/>
    <property type="gene ID" value="ENSMUSG00000035437.16"/>
</dbReference>
<dbReference type="GeneID" id="227800"/>
<dbReference type="KEGG" id="mmu:227800"/>
<dbReference type="UCSC" id="uc008jmw.1">
    <molecule id="A2AWA9-3"/>
    <property type="organism name" value="mouse"/>
</dbReference>
<dbReference type="UCSC" id="uc008jmx.1">
    <molecule id="A2AWA9-1"/>
    <property type="organism name" value="mouse"/>
</dbReference>
<dbReference type="UCSC" id="uc008jmy.1">
    <molecule id="A2AWA9-2"/>
    <property type="organism name" value="mouse"/>
</dbReference>
<dbReference type="AGR" id="MGI:2385139"/>
<dbReference type="CTD" id="23637"/>
<dbReference type="MGI" id="MGI:2385139">
    <property type="gene designation" value="Rabgap1"/>
</dbReference>
<dbReference type="VEuPathDB" id="HostDB:ENSMUSG00000035437"/>
<dbReference type="eggNOG" id="KOG1102">
    <property type="taxonomic scope" value="Eukaryota"/>
</dbReference>
<dbReference type="GeneTree" id="ENSGT00940000157216"/>
<dbReference type="HOGENOM" id="CLU_007394_0_0_1"/>
<dbReference type="InParanoid" id="A2AWA9"/>
<dbReference type="OMA" id="MHSMGYV"/>
<dbReference type="OrthoDB" id="295078at2759"/>
<dbReference type="PhylomeDB" id="A2AWA9"/>
<dbReference type="TreeFam" id="TF317184"/>
<dbReference type="BRENDA" id="2.3.1.23">
    <property type="organism ID" value="3474"/>
</dbReference>
<dbReference type="Reactome" id="R-MMU-8854214">
    <property type="pathway name" value="TBC/RABGAPs"/>
</dbReference>
<dbReference type="BioGRID-ORCS" id="227800">
    <property type="hits" value="3 hits in 79 CRISPR screens"/>
</dbReference>
<dbReference type="ChiTaRS" id="Rabgap1">
    <property type="organism name" value="mouse"/>
</dbReference>
<dbReference type="PRO" id="PR:A2AWA9"/>
<dbReference type="Proteomes" id="UP000000589">
    <property type="component" value="Chromosome 2"/>
</dbReference>
<dbReference type="RNAct" id="A2AWA9">
    <property type="molecule type" value="protein"/>
</dbReference>
<dbReference type="Bgee" id="ENSMUSG00000035437">
    <property type="expression patterns" value="Expressed in undifferentiated genital tubercle and 248 other cell types or tissues"/>
</dbReference>
<dbReference type="ExpressionAtlas" id="A2AWA9">
    <property type="expression patterns" value="baseline and differential"/>
</dbReference>
<dbReference type="GO" id="GO:0005813">
    <property type="term" value="C:centrosome"/>
    <property type="evidence" value="ECO:0007669"/>
    <property type="project" value="UniProtKB-SubCell"/>
</dbReference>
<dbReference type="GO" id="GO:0005829">
    <property type="term" value="C:cytosol"/>
    <property type="evidence" value="ECO:0007669"/>
    <property type="project" value="UniProtKB-SubCell"/>
</dbReference>
<dbReference type="GO" id="GO:0005096">
    <property type="term" value="F:GTPase activator activity"/>
    <property type="evidence" value="ECO:0007669"/>
    <property type="project" value="UniProtKB-KW"/>
</dbReference>
<dbReference type="GO" id="GO:0031267">
    <property type="term" value="F:small GTPase binding"/>
    <property type="evidence" value="ECO:0007669"/>
    <property type="project" value="Ensembl"/>
</dbReference>
<dbReference type="CDD" id="cd01211">
    <property type="entry name" value="PTB_Rab6GAP"/>
    <property type="match status" value="1"/>
</dbReference>
<dbReference type="FunFam" id="1.10.10.750:FF:000004">
    <property type="entry name" value="Putative rab gtpase-activating protein 1"/>
    <property type="match status" value="1"/>
</dbReference>
<dbReference type="FunFam" id="2.30.29.30:FF:000125">
    <property type="entry name" value="Putative rab gtpase-activating protein 1"/>
    <property type="match status" value="1"/>
</dbReference>
<dbReference type="FunFam" id="1.10.472.80:FF:000007">
    <property type="entry name" value="Rab GTPase-activating protein 1 isoform X1"/>
    <property type="match status" value="1"/>
</dbReference>
<dbReference type="FunFam" id="1.10.8.270:FF:000001">
    <property type="entry name" value="TBC1 domain family member 1"/>
    <property type="match status" value="1"/>
</dbReference>
<dbReference type="Gene3D" id="2.30.29.30">
    <property type="entry name" value="Pleckstrin-homology domain (PH domain)/Phosphotyrosine-binding domain (PTB)"/>
    <property type="match status" value="1"/>
</dbReference>
<dbReference type="Gene3D" id="1.10.8.270">
    <property type="entry name" value="putative rabgap domain of human tbc1 domain family member 14 like domains"/>
    <property type="match status" value="1"/>
</dbReference>
<dbReference type="Gene3D" id="1.10.10.750">
    <property type="entry name" value="Ypt/Rab-GAP domain of gyp1p, domain 1"/>
    <property type="match status" value="1"/>
</dbReference>
<dbReference type="Gene3D" id="1.10.472.80">
    <property type="entry name" value="Ypt/Rab-GAP domain of gyp1p, domain 3"/>
    <property type="match status" value="1"/>
</dbReference>
<dbReference type="InterPro" id="IPR022164">
    <property type="entry name" value="Kinesin-like"/>
</dbReference>
<dbReference type="InterPro" id="IPR011993">
    <property type="entry name" value="PH-like_dom_sf"/>
</dbReference>
<dbReference type="InterPro" id="IPR006020">
    <property type="entry name" value="PTB/PI_dom"/>
</dbReference>
<dbReference type="InterPro" id="IPR000195">
    <property type="entry name" value="Rab-GAP-TBC_dom"/>
</dbReference>
<dbReference type="InterPro" id="IPR035969">
    <property type="entry name" value="Rab-GAP_TBC_sf"/>
</dbReference>
<dbReference type="InterPro" id="IPR050302">
    <property type="entry name" value="Rab_GAP_TBC_domain"/>
</dbReference>
<dbReference type="PANTHER" id="PTHR47219:SF6">
    <property type="entry name" value="RAB GTPASE-ACTIVATING PROTEIN 1"/>
    <property type="match status" value="1"/>
</dbReference>
<dbReference type="PANTHER" id="PTHR47219">
    <property type="entry name" value="RAB GTPASE-ACTIVATING PROTEIN 1-LIKE"/>
    <property type="match status" value="1"/>
</dbReference>
<dbReference type="Pfam" id="PF12473">
    <property type="entry name" value="DUF3694"/>
    <property type="match status" value="1"/>
</dbReference>
<dbReference type="Pfam" id="PF00640">
    <property type="entry name" value="PID"/>
    <property type="match status" value="1"/>
</dbReference>
<dbReference type="Pfam" id="PF00566">
    <property type="entry name" value="RabGAP-TBC"/>
    <property type="match status" value="1"/>
</dbReference>
<dbReference type="SMART" id="SM00462">
    <property type="entry name" value="PTB"/>
    <property type="match status" value="1"/>
</dbReference>
<dbReference type="SMART" id="SM00164">
    <property type="entry name" value="TBC"/>
    <property type="match status" value="1"/>
</dbReference>
<dbReference type="SUPFAM" id="SSF50729">
    <property type="entry name" value="PH domain-like"/>
    <property type="match status" value="1"/>
</dbReference>
<dbReference type="SUPFAM" id="SSF47923">
    <property type="entry name" value="Ypt/Rab-GAP domain of gyp1p"/>
    <property type="match status" value="2"/>
</dbReference>
<dbReference type="PROSITE" id="PS01179">
    <property type="entry name" value="PID"/>
    <property type="match status" value="1"/>
</dbReference>
<dbReference type="PROSITE" id="PS50086">
    <property type="entry name" value="TBC_RABGAP"/>
    <property type="match status" value="1"/>
</dbReference>
<name>RBGP1_MOUSE</name>
<protein>
    <recommendedName>
        <fullName>Rab GTPase-activating protein 1</fullName>
    </recommendedName>
    <alternativeName>
        <fullName>GAP and centrosome-associated protein</fullName>
    </alternativeName>
    <alternativeName>
        <fullName>Rab6 GTPase-activating protein GAPCenA</fullName>
    </alternativeName>
</protein>
<gene>
    <name evidence="17" type="primary">Rabgap1</name>
    <name evidence="16" type="synonym">Kiaa4104</name>
</gene>
<sequence length="1064" mass="120798">MDDKASVGKISVSSDSVSTLNSEDFVLVSRQGDETPSTNNGSDDEKTGLKIVGNGSEQQLQKELADVLMDPPMDDQPGERSQLDGEGDGPLSNQLSASSTINPVPLVGLPKPEMSLPVKPGQGDSEVSSPFTPVADEDSVVFNKLTYLGCASVNAPRSEVEALRMMSILRSQCQISLDVTLSVPNVSEGTVRLLDPQTNTEIANYPIYKILFCVRGHDGTPESDCFAFTESHYNAELFRIHVFRCEIQEAVSRILYSFATAFRRSAKQTPLSATAAPQTPDSDIFTFSVSLEIKEDDGKGYFSAVPKDKDRQCFKLRQGIDKKIVICVQQTANKELAIERCFGLLLSPGKDVRNSDMHLLDLESMGKSSDGKSYVITGSWNPKSPHFQVVNEETPKDKVLFMTTAVDLVITEVQEPVRFLLETKVRVCSPNERLFWPFSKRSTTENFFLKLKQIKQKEKKNNADTLYEVVCLESESERERRKTTASPSVRLPQSGSQSSMIPSPPEDDEEEDNDEPLLSGFGDVSKECAEKILETWGELLSKWHLNLSVRPKQLSSLVRSGVPEALRGEVWQLLAGCHNNDHLVEKYRILITKESPQDSAITRDINRTFPAHDYFKDTGGDGQDSLYKICKAYSVYDEEIGYCQGQSFLAAVLLLHMPEEQAFSVLVKIMFDYGLRELFKQNFEDLHCKFYQLERLMQEYIPDLYNHFLDISLEAHMYASQWFLTLFTAKFPLYMVFHIIDLLLCEGISVIFNVALGLLKTSKDDLLLTDFEGALKFFRVQLPKRYRSEENAKRLMELACNTKISQKKLKKFEKEYHTMREQQAQQEDPIERFERENRRLQEANMRLEQENDDLAHELVTSKIALRKDLDNAEEKADALNKELLMTKQKLIDAEDEKRRLEEESAQLKEMCRRELDKAESEIKKNSSIIGDYKQICSQLSERLEKQQTANKVEIEKIRQKVDDCDRCRDFFNKEGRVKGISSAKGVSDEDTDEEKETLKNQLREMELELAQTKLQLVEAECKIQDLEHHLGLALSEVQAAKKTWFNRTLSSIKTATGVQGKETC</sequence>
<evidence type="ECO:0000250" key="1"/>
<evidence type="ECO:0000250" key="2">
    <source>
        <dbReference type="UniProtKB" id="Q9Y3P9"/>
    </source>
</evidence>
<evidence type="ECO:0000255" key="3"/>
<evidence type="ECO:0000255" key="4">
    <source>
        <dbReference type="PROSITE-ProRule" id="PRU00148"/>
    </source>
</evidence>
<evidence type="ECO:0000255" key="5">
    <source>
        <dbReference type="PROSITE-ProRule" id="PRU00163"/>
    </source>
</evidence>
<evidence type="ECO:0000256" key="6">
    <source>
        <dbReference type="SAM" id="MobiDB-lite"/>
    </source>
</evidence>
<evidence type="ECO:0000269" key="7">
    <source>
    </source>
</evidence>
<evidence type="ECO:0000269" key="8">
    <source ref="2"/>
</evidence>
<evidence type="ECO:0000303" key="9">
    <source>
    </source>
</evidence>
<evidence type="ECO:0000305" key="10"/>
<evidence type="ECO:0000312" key="11">
    <source>
        <dbReference type="EMBL" id="AAH26862.1"/>
    </source>
</evidence>
<evidence type="ECO:0000312" key="12">
    <source>
        <dbReference type="EMBL" id="AAH31714.1"/>
    </source>
</evidence>
<evidence type="ECO:0000312" key="13">
    <source>
        <dbReference type="EMBL" id="BAC27344.1"/>
    </source>
</evidence>
<evidence type="ECO:0000312" key="14">
    <source>
        <dbReference type="EMBL" id="BAC31880.1"/>
    </source>
</evidence>
<evidence type="ECO:0000312" key="15">
    <source>
        <dbReference type="EMBL" id="BAC34703.1"/>
    </source>
</evidence>
<evidence type="ECO:0000312" key="16">
    <source>
        <dbReference type="EMBL" id="BAD90509.1"/>
    </source>
</evidence>
<evidence type="ECO:0000312" key="17">
    <source>
        <dbReference type="MGI" id="MGI:2385139"/>
    </source>
</evidence>
<evidence type="ECO:0007744" key="18">
    <source>
    </source>
</evidence>
<proteinExistence type="evidence at protein level"/>
<comment type="function">
    <text evidence="2">May act as a GTPase-activating protein of RAB6A. May play a role in microtubule nucleation by centrosome. May participate in a RAB6A-mediated pathway involved in the metaphase-anaphase transition (By similarity).</text>
</comment>
<comment type="subunit">
    <text evidence="2">Interacts with RAB6A and tubulin gamma.</text>
</comment>
<comment type="subcellular location">
    <subcellularLocation>
        <location evidence="2">Cytoplasm</location>
        <location evidence="2">Cytosol</location>
    </subcellularLocation>
    <subcellularLocation>
        <location evidence="2">Cytoplasm</location>
        <location evidence="2">Cytoskeleton</location>
        <location evidence="2">Microtubule organizing center</location>
        <location evidence="2">Centrosome</location>
    </subcellularLocation>
    <text evidence="2">Predominantly cytosolic but also associated with the centrosome.</text>
</comment>
<comment type="alternative products">
    <event type="alternative splicing"/>
    <isoform>
        <id>A2AWA9-1</id>
        <name evidence="8">1</name>
        <sequence type="displayed"/>
    </isoform>
    <isoform>
        <id>A2AWA9-2</id>
        <name evidence="7">2</name>
        <sequence type="described" ref="VSP_052520 VSP_052521"/>
    </isoform>
    <isoform>
        <id>A2AWA9-3</id>
        <name evidence="7">3</name>
        <sequence type="described" ref="VSP_052516 VSP_052517 VSP_052518 VSP_052519"/>
    </isoform>
</comment>
<comment type="domain">
    <text evidence="1">The arginine and glutamine fingers are critical for the GTPase-activating mechanism, they pull out Rab's 'switch 2' glutamine and insert in Rab's active site.</text>
</comment>
<comment type="sequence caution" evidence="10">
    <conflict type="erroneous initiation">
        <sequence resource="EMBL-CDS" id="AAH26862"/>
    </conflict>
</comment>
<comment type="sequence caution" evidence="10">
    <conflict type="erroneous initiation">
        <sequence resource="EMBL-CDS" id="AAH31714"/>
    </conflict>
</comment>
<comment type="sequence caution" evidence="10">
    <conflict type="erroneous initiation">
        <sequence resource="EMBL-CDS" id="BAC34703"/>
    </conflict>
</comment>
<comment type="sequence caution" evidence="10">
    <conflict type="erroneous initiation">
        <sequence resource="EMBL-CDS" id="BAD90509"/>
    </conflict>
</comment>
<feature type="chain" id="PRO_0000298780" description="Rab GTPase-activating protein 1">
    <location>
        <begin position="1"/>
        <end position="1064"/>
    </location>
</feature>
<feature type="domain" description="PID" evidence="4">
    <location>
        <begin position="137"/>
        <end position="293"/>
    </location>
</feature>
<feature type="domain" description="Rab-GAP TBC" evidence="5">
    <location>
        <begin position="561"/>
        <end position="747"/>
    </location>
</feature>
<feature type="region of interest" description="Disordered" evidence="6">
    <location>
        <begin position="1"/>
        <end position="101"/>
    </location>
</feature>
<feature type="region of interest" description="Disordered" evidence="6">
    <location>
        <begin position="478"/>
        <end position="520"/>
    </location>
</feature>
<feature type="coiled-coil region" evidence="3">
    <location>
        <begin position="805"/>
        <end position="1038"/>
    </location>
</feature>
<feature type="compositionally biased region" description="Low complexity" evidence="6">
    <location>
        <begin position="7"/>
        <end position="22"/>
    </location>
</feature>
<feature type="compositionally biased region" description="Polar residues" evidence="6">
    <location>
        <begin position="91"/>
        <end position="101"/>
    </location>
</feature>
<feature type="compositionally biased region" description="Polar residues" evidence="6">
    <location>
        <begin position="484"/>
        <end position="501"/>
    </location>
</feature>
<feature type="compositionally biased region" description="Acidic residues" evidence="6">
    <location>
        <begin position="505"/>
        <end position="515"/>
    </location>
</feature>
<feature type="site" description="Arginine finger" evidence="1">
    <location>
        <position position="603"/>
    </location>
</feature>
<feature type="site" description="Glutamine finger" evidence="1">
    <location>
        <position position="644"/>
    </location>
</feature>
<feature type="modified residue" description="Phosphoserine" evidence="18">
    <location>
        <position position="42"/>
    </location>
</feature>
<feature type="modified residue" description="Phosphoserine" evidence="18">
    <location>
        <position position="355"/>
    </location>
</feature>
<feature type="modified residue" description="Phosphothreonine" evidence="18">
    <location>
        <position position="991"/>
    </location>
</feature>
<feature type="splice variant" id="VSP_052516" description="In isoform 3." evidence="9">
    <location>
        <begin position="1"/>
        <end position="18"/>
    </location>
</feature>
<feature type="splice variant" id="VSP_052517" description="In isoform 3." evidence="9">
    <original>TLNSEDFVLVSR</original>
    <variation>MGLSSLSANKPW</variation>
    <location>
        <begin position="19"/>
        <end position="30"/>
    </location>
</feature>
<feature type="splice variant" id="VSP_052518" description="In isoform 3." evidence="9">
    <original>ESMGKSSDGKSYVITGSWNPKS</original>
    <variation>VRFCCCCCCGLFWLWLVFIRNL</variation>
    <location>
        <begin position="363"/>
        <end position="384"/>
    </location>
</feature>
<feature type="splice variant" id="VSP_052519" description="In isoform 3." evidence="9">
    <location>
        <begin position="385"/>
        <end position="1064"/>
    </location>
</feature>
<feature type="splice variant" id="VSP_052520" description="In isoform 2." evidence="9">
    <original>ISQKKL</original>
    <variation>VQQRLL</variation>
    <location>
        <begin position="804"/>
        <end position="809"/>
    </location>
</feature>
<feature type="splice variant" id="VSP_052521" description="In isoform 2." evidence="9">
    <location>
        <begin position="810"/>
        <end position="1064"/>
    </location>
</feature>
<feature type="sequence conflict" description="In Ref. 1; BAC34703." evidence="10" ref="1">
    <original>Q</original>
    <variation>E</variation>
    <location>
        <position position="646"/>
    </location>
</feature>
<reference evidence="10 14" key="1">
    <citation type="journal article" date="2005" name="Science">
        <title>The transcriptional landscape of the mammalian genome.</title>
        <authorList>
            <person name="Carninci P."/>
            <person name="Kasukawa T."/>
            <person name="Katayama S."/>
            <person name="Gough J."/>
            <person name="Frith M.C."/>
            <person name="Maeda N."/>
            <person name="Oyama R."/>
            <person name="Ravasi T."/>
            <person name="Lenhard B."/>
            <person name="Wells C."/>
            <person name="Kodzius R."/>
            <person name="Shimokawa K."/>
            <person name="Bajic V.B."/>
            <person name="Brenner S.E."/>
            <person name="Batalov S."/>
            <person name="Forrest A.R."/>
            <person name="Zavolan M."/>
            <person name="Davis M.J."/>
            <person name="Wilming L.G."/>
            <person name="Aidinis V."/>
            <person name="Allen J.E."/>
            <person name="Ambesi-Impiombato A."/>
            <person name="Apweiler R."/>
            <person name="Aturaliya R.N."/>
            <person name="Bailey T.L."/>
            <person name="Bansal M."/>
            <person name="Baxter L."/>
            <person name="Beisel K.W."/>
            <person name="Bersano T."/>
            <person name="Bono H."/>
            <person name="Chalk A.M."/>
            <person name="Chiu K.P."/>
            <person name="Choudhary V."/>
            <person name="Christoffels A."/>
            <person name="Clutterbuck D.R."/>
            <person name="Crowe M.L."/>
            <person name="Dalla E."/>
            <person name="Dalrymple B.P."/>
            <person name="de Bono B."/>
            <person name="Della Gatta G."/>
            <person name="di Bernardo D."/>
            <person name="Down T."/>
            <person name="Engstrom P."/>
            <person name="Fagiolini M."/>
            <person name="Faulkner G."/>
            <person name="Fletcher C.F."/>
            <person name="Fukushima T."/>
            <person name="Furuno M."/>
            <person name="Futaki S."/>
            <person name="Gariboldi M."/>
            <person name="Georgii-Hemming P."/>
            <person name="Gingeras T.R."/>
            <person name="Gojobori T."/>
            <person name="Green R.E."/>
            <person name="Gustincich S."/>
            <person name="Harbers M."/>
            <person name="Hayashi Y."/>
            <person name="Hensch T.K."/>
            <person name="Hirokawa N."/>
            <person name="Hill D."/>
            <person name="Huminiecki L."/>
            <person name="Iacono M."/>
            <person name="Ikeo K."/>
            <person name="Iwama A."/>
            <person name="Ishikawa T."/>
            <person name="Jakt M."/>
            <person name="Kanapin A."/>
            <person name="Katoh M."/>
            <person name="Kawasawa Y."/>
            <person name="Kelso J."/>
            <person name="Kitamura H."/>
            <person name="Kitano H."/>
            <person name="Kollias G."/>
            <person name="Krishnan S.P."/>
            <person name="Kruger A."/>
            <person name="Kummerfeld S.K."/>
            <person name="Kurochkin I.V."/>
            <person name="Lareau L.F."/>
            <person name="Lazarevic D."/>
            <person name="Lipovich L."/>
            <person name="Liu J."/>
            <person name="Liuni S."/>
            <person name="McWilliam S."/>
            <person name="Madan Babu M."/>
            <person name="Madera M."/>
            <person name="Marchionni L."/>
            <person name="Matsuda H."/>
            <person name="Matsuzawa S."/>
            <person name="Miki H."/>
            <person name="Mignone F."/>
            <person name="Miyake S."/>
            <person name="Morris K."/>
            <person name="Mottagui-Tabar S."/>
            <person name="Mulder N."/>
            <person name="Nakano N."/>
            <person name="Nakauchi H."/>
            <person name="Ng P."/>
            <person name="Nilsson R."/>
            <person name="Nishiguchi S."/>
            <person name="Nishikawa S."/>
            <person name="Nori F."/>
            <person name="Ohara O."/>
            <person name="Okazaki Y."/>
            <person name="Orlando V."/>
            <person name="Pang K.C."/>
            <person name="Pavan W.J."/>
            <person name="Pavesi G."/>
            <person name="Pesole G."/>
            <person name="Petrovsky N."/>
            <person name="Piazza S."/>
            <person name="Reed J."/>
            <person name="Reid J.F."/>
            <person name="Ring B.Z."/>
            <person name="Ringwald M."/>
            <person name="Rost B."/>
            <person name="Ruan Y."/>
            <person name="Salzberg S.L."/>
            <person name="Sandelin A."/>
            <person name="Schneider C."/>
            <person name="Schoenbach C."/>
            <person name="Sekiguchi K."/>
            <person name="Semple C.A."/>
            <person name="Seno S."/>
            <person name="Sessa L."/>
            <person name="Sheng Y."/>
            <person name="Shibata Y."/>
            <person name="Shimada H."/>
            <person name="Shimada K."/>
            <person name="Silva D."/>
            <person name="Sinclair B."/>
            <person name="Sperling S."/>
            <person name="Stupka E."/>
            <person name="Sugiura K."/>
            <person name="Sultana R."/>
            <person name="Takenaka Y."/>
            <person name="Taki K."/>
            <person name="Tammoja K."/>
            <person name="Tan S.L."/>
            <person name="Tang S."/>
            <person name="Taylor M.S."/>
            <person name="Tegner J."/>
            <person name="Teichmann S.A."/>
            <person name="Ueda H.R."/>
            <person name="van Nimwegen E."/>
            <person name="Verardo R."/>
            <person name="Wei C.L."/>
            <person name="Yagi K."/>
            <person name="Yamanishi H."/>
            <person name="Zabarovsky E."/>
            <person name="Zhu S."/>
            <person name="Zimmer A."/>
            <person name="Hide W."/>
            <person name="Bult C."/>
            <person name="Grimmond S.M."/>
            <person name="Teasdale R.D."/>
            <person name="Liu E.T."/>
            <person name="Brusic V."/>
            <person name="Quackenbush J."/>
            <person name="Wahlestedt C."/>
            <person name="Mattick J.S."/>
            <person name="Hume D.A."/>
            <person name="Kai C."/>
            <person name="Sasaki D."/>
            <person name="Tomaru Y."/>
            <person name="Fukuda S."/>
            <person name="Kanamori-Katayama M."/>
            <person name="Suzuki M."/>
            <person name="Aoki J."/>
            <person name="Arakawa T."/>
            <person name="Iida J."/>
            <person name="Imamura K."/>
            <person name="Itoh M."/>
            <person name="Kato T."/>
            <person name="Kawaji H."/>
            <person name="Kawagashira N."/>
            <person name="Kawashima T."/>
            <person name="Kojima M."/>
            <person name="Kondo S."/>
            <person name="Konno H."/>
            <person name="Nakano K."/>
            <person name="Ninomiya N."/>
            <person name="Nishio T."/>
            <person name="Okada M."/>
            <person name="Plessy C."/>
            <person name="Shibata K."/>
            <person name="Shiraki T."/>
            <person name="Suzuki S."/>
            <person name="Tagami M."/>
            <person name="Waki K."/>
            <person name="Watahiki A."/>
            <person name="Okamura-Oho Y."/>
            <person name="Suzuki H."/>
            <person name="Kawai J."/>
            <person name="Hayashizaki Y."/>
        </authorList>
    </citation>
    <scope>NUCLEOTIDE SEQUENCE [LARGE SCALE MRNA] (ISOFORMS 2 AND 3)</scope>
    <scope>NUCLEOTIDE SEQUENCE [LARGE SCALE MRNA] OF 646-1064 (ISOFORM 1)</scope>
    <source>
        <strain evidence="14">C57BL/6J</strain>
        <tissue evidence="15">Embryonic spinal ganglion</tissue>
        <tissue evidence="13">Embryonic testis</tissue>
        <tissue evidence="14">Retina</tissue>
    </source>
</reference>
<reference evidence="10 16" key="2">
    <citation type="submission" date="2005-02" db="EMBL/GenBank/DDBJ databases">
        <title>Prediction of the coding sequences of mouse homologues of KIAA gene. The complete nucleotide sequences of mouse KIAA-homologous cDNAs identified by screening of terminal sequences of cDNA clones randomly sampled from size-fractionated libraries.</title>
        <authorList>
            <person name="Okazaki N."/>
            <person name="Kikuno R.F."/>
            <person name="Ohara R."/>
            <person name="Inamoto S."/>
            <person name="Nagase T."/>
            <person name="Ohara O."/>
            <person name="Koga H."/>
        </authorList>
    </citation>
    <scope>NUCLEOTIDE SEQUENCE [LARGE SCALE MRNA] (ISOFORM 1)</scope>
    <source>
        <tissue evidence="16">Fetal brain</tissue>
    </source>
</reference>
<reference key="3">
    <citation type="journal article" date="2009" name="PLoS Biol.">
        <title>Lineage-specific biology revealed by a finished genome assembly of the mouse.</title>
        <authorList>
            <person name="Church D.M."/>
            <person name="Goodstadt L."/>
            <person name="Hillier L.W."/>
            <person name="Zody M.C."/>
            <person name="Goldstein S."/>
            <person name="She X."/>
            <person name="Bult C.J."/>
            <person name="Agarwala R."/>
            <person name="Cherry J.L."/>
            <person name="DiCuccio M."/>
            <person name="Hlavina W."/>
            <person name="Kapustin Y."/>
            <person name="Meric P."/>
            <person name="Maglott D."/>
            <person name="Birtle Z."/>
            <person name="Marques A.C."/>
            <person name="Graves T."/>
            <person name="Zhou S."/>
            <person name="Teague B."/>
            <person name="Potamousis K."/>
            <person name="Churas C."/>
            <person name="Place M."/>
            <person name="Herschleb J."/>
            <person name="Runnheim R."/>
            <person name="Forrest D."/>
            <person name="Amos-Landgraf J."/>
            <person name="Schwartz D.C."/>
            <person name="Cheng Z."/>
            <person name="Lindblad-Toh K."/>
            <person name="Eichler E.E."/>
            <person name="Ponting C.P."/>
        </authorList>
    </citation>
    <scope>NUCLEOTIDE SEQUENCE [LARGE SCALE GENOMIC DNA]</scope>
    <source>
        <strain>C57BL/6J</strain>
    </source>
</reference>
<reference evidence="10 11" key="4">
    <citation type="journal article" date="2004" name="Genome Res.">
        <title>The status, quality, and expansion of the NIH full-length cDNA project: the Mammalian Gene Collection (MGC).</title>
        <authorList>
            <consortium name="The MGC Project Team"/>
        </authorList>
    </citation>
    <scope>NUCLEOTIDE SEQUENCE [LARGE SCALE MRNA] OF 733-1064 (ISOFORM 1)</scope>
    <source>
        <strain evidence="11">Czech II</strain>
        <strain evidence="12">FVB/N</strain>
        <tissue evidence="12">Kidney</tissue>
        <tissue evidence="11">Mammary tumor</tissue>
    </source>
</reference>
<reference key="5">
    <citation type="journal article" date="2009" name="Mol. Cell. Proteomics">
        <title>Large scale localization of protein phosphorylation by use of electron capture dissociation mass spectrometry.</title>
        <authorList>
            <person name="Sweet S.M."/>
            <person name="Bailey C.M."/>
            <person name="Cunningham D.L."/>
            <person name="Heath J.K."/>
            <person name="Cooper H.J."/>
        </authorList>
    </citation>
    <scope>IDENTIFICATION BY MASS SPECTROMETRY [LARGE SCALE ANALYSIS]</scope>
    <source>
        <tissue>Embryonic fibroblast</tissue>
    </source>
</reference>
<reference key="6">
    <citation type="journal article" date="2010" name="Cell">
        <title>A tissue-specific atlas of mouse protein phosphorylation and expression.</title>
        <authorList>
            <person name="Huttlin E.L."/>
            <person name="Jedrychowski M.P."/>
            <person name="Elias J.E."/>
            <person name="Goswami T."/>
            <person name="Rad R."/>
            <person name="Beausoleil S.A."/>
            <person name="Villen J."/>
            <person name="Haas W."/>
            <person name="Sowa M.E."/>
            <person name="Gygi S.P."/>
        </authorList>
    </citation>
    <scope>PHOSPHORYLATION [LARGE SCALE ANALYSIS] AT SER-42; SER-355 AND THR-991</scope>
    <scope>IDENTIFICATION BY MASS SPECTROMETRY [LARGE SCALE ANALYSIS]</scope>
    <source>
        <tissue>Brain</tissue>
        <tissue>Brown adipose tissue</tissue>
        <tissue>Heart</tissue>
        <tissue>Kidney</tissue>
        <tissue>Liver</tissue>
        <tissue>Lung</tissue>
        <tissue>Pancreas</tissue>
        <tissue>Spleen</tissue>
        <tissue>Testis</tissue>
    </source>
</reference>